<evidence type="ECO:0000255" key="1">
    <source>
        <dbReference type="HAMAP-Rule" id="MF_00037"/>
    </source>
</evidence>
<evidence type="ECO:0000256" key="2">
    <source>
        <dbReference type="SAM" id="MobiDB-lite"/>
    </source>
</evidence>
<keyword id="KW-0131">Cell cycle</keyword>
<keyword id="KW-0132">Cell division</keyword>
<keyword id="KW-0133">Cell shape</keyword>
<keyword id="KW-0961">Cell wall biogenesis/degradation</keyword>
<keyword id="KW-0963">Cytoplasm</keyword>
<keyword id="KW-0274">FAD</keyword>
<keyword id="KW-0285">Flavoprotein</keyword>
<keyword id="KW-0521">NADP</keyword>
<keyword id="KW-0560">Oxidoreductase</keyword>
<keyword id="KW-0573">Peptidoglycan synthesis</keyword>
<proteinExistence type="inferred from homology"/>
<sequence length="318" mass="35537">MSLTLSELQIRTLKQTLESSKIPFKSEVRLDILSSFKIGGICPVVVEPENSNQVLETLFIFHKSEIPWKILGGGSNLLISDHPDNFVTLRLSGKFKEFEYLEGGKFRIGSATNTTPTFRQISQLGYTGAEFLSTIPGWTGGAVIQNAGCYGGELFDLIQTVEFLRNNEIFVRSPSEIKHGYRFTEFLNEKDSIILGIEILLKEGNLEEIQTSLKDKRDRRNSSQPENKKSAGSVFKNPKIFLENGKEIKAWELIDQAGLRGQIKGGAQISPEHCNFIVNVGAATAADVNYLVELILDKVFQTTGIRLNREIEYFGDIP</sequence>
<feature type="chain" id="PRO_1000002892" description="UDP-N-acetylenolpyruvoylglucosamine reductase">
    <location>
        <begin position="1"/>
        <end position="318"/>
    </location>
</feature>
<feature type="domain" description="FAD-binding PCMH-type" evidence="1">
    <location>
        <begin position="38"/>
        <end position="204"/>
    </location>
</feature>
<feature type="region of interest" description="Disordered" evidence="2">
    <location>
        <begin position="212"/>
        <end position="232"/>
    </location>
</feature>
<feature type="compositionally biased region" description="Basic and acidic residues" evidence="2">
    <location>
        <begin position="213"/>
        <end position="229"/>
    </location>
</feature>
<feature type="active site" evidence="1">
    <location>
        <position position="182"/>
    </location>
</feature>
<feature type="active site" description="Proton donor" evidence="1">
    <location>
        <position position="233"/>
    </location>
</feature>
<feature type="active site" evidence="1">
    <location>
        <position position="310"/>
    </location>
</feature>
<organism>
    <name type="scientific">Leptospira borgpetersenii serovar Hardjo-bovis (strain JB197)</name>
    <dbReference type="NCBI Taxonomy" id="355277"/>
    <lineage>
        <taxon>Bacteria</taxon>
        <taxon>Pseudomonadati</taxon>
        <taxon>Spirochaetota</taxon>
        <taxon>Spirochaetia</taxon>
        <taxon>Leptospirales</taxon>
        <taxon>Leptospiraceae</taxon>
        <taxon>Leptospira</taxon>
    </lineage>
</organism>
<reference key="1">
    <citation type="journal article" date="2006" name="Proc. Natl. Acad. Sci. U.S.A.">
        <title>Genome reduction in Leptospira borgpetersenii reflects limited transmission potential.</title>
        <authorList>
            <person name="Bulach D.M."/>
            <person name="Zuerner R.L."/>
            <person name="Wilson P."/>
            <person name="Seemann T."/>
            <person name="McGrath A."/>
            <person name="Cullen P.A."/>
            <person name="Davis J."/>
            <person name="Johnson M."/>
            <person name="Kuczek E."/>
            <person name="Alt D.P."/>
            <person name="Peterson-Burch B."/>
            <person name="Coppel R.L."/>
            <person name="Rood J.I."/>
            <person name="Davies J.K."/>
            <person name="Adler B."/>
        </authorList>
    </citation>
    <scope>NUCLEOTIDE SEQUENCE [LARGE SCALE GENOMIC DNA]</scope>
    <source>
        <strain>JB197</strain>
    </source>
</reference>
<comment type="function">
    <text evidence="1">Cell wall formation.</text>
</comment>
<comment type="catalytic activity">
    <reaction evidence="1">
        <text>UDP-N-acetyl-alpha-D-muramate + NADP(+) = UDP-N-acetyl-3-O-(1-carboxyvinyl)-alpha-D-glucosamine + NADPH + H(+)</text>
        <dbReference type="Rhea" id="RHEA:12248"/>
        <dbReference type="ChEBI" id="CHEBI:15378"/>
        <dbReference type="ChEBI" id="CHEBI:57783"/>
        <dbReference type="ChEBI" id="CHEBI:58349"/>
        <dbReference type="ChEBI" id="CHEBI:68483"/>
        <dbReference type="ChEBI" id="CHEBI:70757"/>
        <dbReference type="EC" id="1.3.1.98"/>
    </reaction>
</comment>
<comment type="cofactor">
    <cofactor evidence="1">
        <name>FAD</name>
        <dbReference type="ChEBI" id="CHEBI:57692"/>
    </cofactor>
</comment>
<comment type="pathway">
    <text evidence="1">Cell wall biogenesis; peptidoglycan biosynthesis.</text>
</comment>
<comment type="subcellular location">
    <subcellularLocation>
        <location evidence="1">Cytoplasm</location>
    </subcellularLocation>
</comment>
<comment type="similarity">
    <text evidence="1">Belongs to the MurB family.</text>
</comment>
<name>MURB_LEPBJ</name>
<protein>
    <recommendedName>
        <fullName evidence="1">UDP-N-acetylenolpyruvoylglucosamine reductase</fullName>
        <ecNumber evidence="1">1.3.1.98</ecNumber>
    </recommendedName>
    <alternativeName>
        <fullName evidence="1">UDP-N-acetylmuramate dehydrogenase</fullName>
    </alternativeName>
</protein>
<gene>
    <name evidence="1" type="primary">murB</name>
    <name type="ordered locus">LBJ_0387</name>
</gene>
<dbReference type="EC" id="1.3.1.98" evidence="1"/>
<dbReference type="EMBL" id="CP000350">
    <property type="protein sequence ID" value="ABJ75103.1"/>
    <property type="molecule type" value="Genomic_DNA"/>
</dbReference>
<dbReference type="RefSeq" id="WP_011671520.1">
    <property type="nucleotide sequence ID" value="NC_008510.1"/>
</dbReference>
<dbReference type="SMR" id="Q04VG7"/>
<dbReference type="KEGG" id="lbj:LBJ_0387"/>
<dbReference type="HOGENOM" id="CLU_035304_1_1_12"/>
<dbReference type="UniPathway" id="UPA00219"/>
<dbReference type="Proteomes" id="UP000000656">
    <property type="component" value="Chromosome 1"/>
</dbReference>
<dbReference type="GO" id="GO:0005829">
    <property type="term" value="C:cytosol"/>
    <property type="evidence" value="ECO:0007669"/>
    <property type="project" value="TreeGrafter"/>
</dbReference>
<dbReference type="GO" id="GO:0071949">
    <property type="term" value="F:FAD binding"/>
    <property type="evidence" value="ECO:0007669"/>
    <property type="project" value="InterPro"/>
</dbReference>
<dbReference type="GO" id="GO:0008762">
    <property type="term" value="F:UDP-N-acetylmuramate dehydrogenase activity"/>
    <property type="evidence" value="ECO:0007669"/>
    <property type="project" value="UniProtKB-UniRule"/>
</dbReference>
<dbReference type="GO" id="GO:0051301">
    <property type="term" value="P:cell division"/>
    <property type="evidence" value="ECO:0007669"/>
    <property type="project" value="UniProtKB-KW"/>
</dbReference>
<dbReference type="GO" id="GO:0071555">
    <property type="term" value="P:cell wall organization"/>
    <property type="evidence" value="ECO:0007669"/>
    <property type="project" value="UniProtKB-KW"/>
</dbReference>
<dbReference type="GO" id="GO:0009252">
    <property type="term" value="P:peptidoglycan biosynthetic process"/>
    <property type="evidence" value="ECO:0007669"/>
    <property type="project" value="UniProtKB-UniRule"/>
</dbReference>
<dbReference type="GO" id="GO:0008360">
    <property type="term" value="P:regulation of cell shape"/>
    <property type="evidence" value="ECO:0007669"/>
    <property type="project" value="UniProtKB-KW"/>
</dbReference>
<dbReference type="Gene3D" id="3.30.465.10">
    <property type="match status" value="1"/>
</dbReference>
<dbReference type="Gene3D" id="3.90.78.10">
    <property type="entry name" value="UDP-N-acetylenolpyruvoylglucosamine reductase, C-terminal domain"/>
    <property type="match status" value="1"/>
</dbReference>
<dbReference type="Gene3D" id="3.30.43.10">
    <property type="entry name" value="Uridine Diphospho-n-acetylenolpyruvylglucosamine Reductase, domain 2"/>
    <property type="match status" value="1"/>
</dbReference>
<dbReference type="HAMAP" id="MF_00037">
    <property type="entry name" value="MurB"/>
    <property type="match status" value="1"/>
</dbReference>
<dbReference type="InterPro" id="IPR016166">
    <property type="entry name" value="FAD-bd_PCMH"/>
</dbReference>
<dbReference type="InterPro" id="IPR036318">
    <property type="entry name" value="FAD-bd_PCMH-like_sf"/>
</dbReference>
<dbReference type="InterPro" id="IPR016167">
    <property type="entry name" value="FAD-bd_PCMH_sub1"/>
</dbReference>
<dbReference type="InterPro" id="IPR016169">
    <property type="entry name" value="FAD-bd_PCMH_sub2"/>
</dbReference>
<dbReference type="InterPro" id="IPR003170">
    <property type="entry name" value="MurB"/>
</dbReference>
<dbReference type="InterPro" id="IPR011601">
    <property type="entry name" value="MurB_C"/>
</dbReference>
<dbReference type="InterPro" id="IPR036635">
    <property type="entry name" value="MurB_C_sf"/>
</dbReference>
<dbReference type="InterPro" id="IPR006094">
    <property type="entry name" value="Oxid_FAD_bind_N"/>
</dbReference>
<dbReference type="NCBIfam" id="TIGR00179">
    <property type="entry name" value="murB"/>
    <property type="match status" value="1"/>
</dbReference>
<dbReference type="NCBIfam" id="NF010480">
    <property type="entry name" value="PRK13905.1"/>
    <property type="match status" value="1"/>
</dbReference>
<dbReference type="PANTHER" id="PTHR21071">
    <property type="entry name" value="UDP-N-ACETYLENOLPYRUVOYLGLUCOSAMINE REDUCTASE"/>
    <property type="match status" value="1"/>
</dbReference>
<dbReference type="PANTHER" id="PTHR21071:SF4">
    <property type="entry name" value="UDP-N-ACETYLENOLPYRUVOYLGLUCOSAMINE REDUCTASE"/>
    <property type="match status" value="1"/>
</dbReference>
<dbReference type="Pfam" id="PF01565">
    <property type="entry name" value="FAD_binding_4"/>
    <property type="match status" value="1"/>
</dbReference>
<dbReference type="Pfam" id="PF02873">
    <property type="entry name" value="MurB_C"/>
    <property type="match status" value="1"/>
</dbReference>
<dbReference type="SUPFAM" id="SSF56176">
    <property type="entry name" value="FAD-binding/transporter-associated domain-like"/>
    <property type="match status" value="1"/>
</dbReference>
<dbReference type="SUPFAM" id="SSF56194">
    <property type="entry name" value="Uridine diphospho-N-Acetylenolpyruvylglucosamine reductase, MurB, C-terminal domain"/>
    <property type="match status" value="1"/>
</dbReference>
<dbReference type="PROSITE" id="PS51387">
    <property type="entry name" value="FAD_PCMH"/>
    <property type="match status" value="1"/>
</dbReference>
<accession>Q04VG7</accession>